<dbReference type="EMBL" id="AJ493279">
    <property type="protein sequence ID" value="CAD38166.1"/>
    <property type="molecule type" value="mRNA"/>
</dbReference>
<dbReference type="SMR" id="Q8NJ52"/>
<dbReference type="Allergome" id="993">
    <property type="allergen name" value="Cla h NTF2"/>
</dbReference>
<dbReference type="GO" id="GO:0005737">
    <property type="term" value="C:cytoplasm"/>
    <property type="evidence" value="ECO:0007669"/>
    <property type="project" value="UniProtKB-SubCell"/>
</dbReference>
<dbReference type="GO" id="GO:0006913">
    <property type="term" value="P:nucleocytoplasmic transport"/>
    <property type="evidence" value="ECO:0007669"/>
    <property type="project" value="InterPro"/>
</dbReference>
<dbReference type="GO" id="GO:0015031">
    <property type="term" value="P:protein transport"/>
    <property type="evidence" value="ECO:0007669"/>
    <property type="project" value="UniProtKB-KW"/>
</dbReference>
<dbReference type="CDD" id="cd00780">
    <property type="entry name" value="NTF2"/>
    <property type="match status" value="1"/>
</dbReference>
<dbReference type="FunFam" id="3.10.450.50:FF:000005">
    <property type="entry name" value="Nuclear transport factor 2"/>
    <property type="match status" value="1"/>
</dbReference>
<dbReference type="Gene3D" id="3.10.450.50">
    <property type="match status" value="1"/>
</dbReference>
<dbReference type="InterPro" id="IPR045875">
    <property type="entry name" value="NTF2"/>
</dbReference>
<dbReference type="InterPro" id="IPR032710">
    <property type="entry name" value="NTF2-like_dom_sf"/>
</dbReference>
<dbReference type="InterPro" id="IPR002075">
    <property type="entry name" value="NTF2_dom"/>
</dbReference>
<dbReference type="InterPro" id="IPR018222">
    <property type="entry name" value="Nuclear_transport_factor_2_euk"/>
</dbReference>
<dbReference type="PANTHER" id="PTHR12612">
    <property type="entry name" value="NUCLEAR TRANSPORT FACTOR 2"/>
    <property type="match status" value="1"/>
</dbReference>
<dbReference type="Pfam" id="PF02136">
    <property type="entry name" value="NTF2"/>
    <property type="match status" value="1"/>
</dbReference>
<dbReference type="SUPFAM" id="SSF54427">
    <property type="entry name" value="NTF2-like"/>
    <property type="match status" value="1"/>
</dbReference>
<dbReference type="PROSITE" id="PS50177">
    <property type="entry name" value="NTF2_DOMAIN"/>
    <property type="match status" value="1"/>
</dbReference>
<protein>
    <recommendedName>
        <fullName>Nuclear transport factor 2</fullName>
        <shortName>NTF-2</shortName>
    </recommendedName>
    <allergenName>Cla h ?</allergenName>
</protein>
<organism>
    <name type="scientific">Davidiella tassiana</name>
    <name type="common">Mycosphaerella tassiana</name>
    <name type="synonym">Cladosporium herbarum</name>
    <dbReference type="NCBI Taxonomy" id="29918"/>
    <lineage>
        <taxon>Eukaryota</taxon>
        <taxon>Fungi</taxon>
        <taxon>Dikarya</taxon>
        <taxon>Ascomycota</taxon>
        <taxon>Pezizomycotina</taxon>
        <taxon>Dothideomycetes</taxon>
        <taxon>Dothideomycetidae</taxon>
        <taxon>Cladosporiales</taxon>
        <taxon>Cladosporiaceae</taxon>
        <taxon>Cladosporium</taxon>
    </lineage>
</organism>
<name>NTF2_DAVTA</name>
<gene>
    <name type="primary">NTF2</name>
</gene>
<sequence>MSDFNAIAQQFTEFYYKTFDTDRAQLAPLYRENSMLTFEQSPFLGTANIVGKLQELPFQRIEHQVATVDAQPSNESGGILVVVSGALLVEEERRPMSYTQTFQLLPADGAYYVFNDVFRLVYPAA</sequence>
<feature type="chain" id="PRO_0000194785" description="Nuclear transport factor 2">
    <location>
        <begin position="1"/>
        <end position="125"/>
    </location>
</feature>
<feature type="domain" description="NTF2" evidence="2">
    <location>
        <begin position="7"/>
        <end position="120"/>
    </location>
</feature>
<reference key="1">
    <citation type="journal article" date="2003" name="Allergy">
        <title>Nuclear transport factor 2 represents a novel cross-reactive fungal allergen.</title>
        <authorList>
            <person name="Weichel M."/>
            <person name="Schmid-Grendelmeier P."/>
            <person name="Flueckiger S."/>
            <person name="Breitenbach M."/>
            <person name="Blaser K."/>
            <person name="Crameri R."/>
        </authorList>
    </citation>
    <scope>NUCLEOTIDE SEQUENCE [MRNA]</scope>
    <scope>ALLERGEN</scope>
    <source>
        <strain>280202-Berlin</strain>
    </source>
</reference>
<evidence type="ECO:0000250" key="1"/>
<evidence type="ECO:0000255" key="2">
    <source>
        <dbReference type="PROSITE-ProRule" id="PRU00137"/>
    </source>
</evidence>
<evidence type="ECO:0000269" key="3">
    <source>
    </source>
</evidence>
<accession>Q8NJ52</accession>
<keyword id="KW-0020">Allergen</keyword>
<keyword id="KW-0963">Cytoplasm</keyword>
<keyword id="KW-0653">Protein transport</keyword>
<keyword id="KW-0813">Transport</keyword>
<proteinExistence type="evidence at protein level"/>
<comment type="function">
    <text evidence="1">Facilitates protein transport into the nucleus. Could be part of a multicomponent system of cytosolic factors that assemble at the pore complex during nuclear import (By similarity).</text>
</comment>
<comment type="subcellular location">
    <subcellularLocation>
        <location evidence="1">Cytoplasm</location>
    </subcellularLocation>
</comment>
<comment type="allergen">
    <text evidence="3">Causes an allergic reaction in human. Binds to IgE. Elicit type I skin reactions in mould-sensitized individuals.</text>
</comment>